<evidence type="ECO:0000255" key="1">
    <source>
        <dbReference type="HAMAP-Rule" id="MF_00536"/>
    </source>
</evidence>
<keyword id="KW-0170">Cobalt</keyword>
<keyword id="KW-0963">Cytoplasm</keyword>
<keyword id="KW-0460">Magnesium</keyword>
<keyword id="KW-0479">Metal-binding</keyword>
<keyword id="KW-0520">NAD</keyword>
<keyword id="KW-0521">NADP</keyword>
<keyword id="KW-0560">Oxidoreductase</keyword>
<keyword id="KW-0664">Pyridoxine biosynthesis</keyword>
<keyword id="KW-0862">Zinc</keyword>
<feature type="chain" id="PRO_1000128266" description="4-hydroxythreonine-4-phosphate dehydrogenase">
    <location>
        <begin position="1"/>
        <end position="322"/>
    </location>
</feature>
<feature type="binding site" evidence="1">
    <location>
        <position position="132"/>
    </location>
    <ligand>
        <name>substrate</name>
    </ligand>
</feature>
<feature type="binding site" evidence="1">
    <location>
        <position position="160"/>
    </location>
    <ligand>
        <name>a divalent metal cation</name>
        <dbReference type="ChEBI" id="CHEBI:60240"/>
        <note>ligand shared between dimeric partners</note>
    </ligand>
</feature>
<feature type="binding site" evidence="1">
    <location>
        <position position="205"/>
    </location>
    <ligand>
        <name>a divalent metal cation</name>
        <dbReference type="ChEBI" id="CHEBI:60240"/>
        <note>ligand shared between dimeric partners</note>
    </ligand>
</feature>
<feature type="binding site" evidence="1">
    <location>
        <position position="260"/>
    </location>
    <ligand>
        <name>a divalent metal cation</name>
        <dbReference type="ChEBI" id="CHEBI:60240"/>
        <note>ligand shared between dimeric partners</note>
    </ligand>
</feature>
<feature type="binding site" evidence="1">
    <location>
        <position position="268"/>
    </location>
    <ligand>
        <name>substrate</name>
    </ligand>
</feature>
<feature type="binding site" evidence="1">
    <location>
        <position position="277"/>
    </location>
    <ligand>
        <name>substrate</name>
    </ligand>
</feature>
<feature type="binding site" evidence="1">
    <location>
        <position position="286"/>
    </location>
    <ligand>
        <name>substrate</name>
    </ligand>
</feature>
<proteinExistence type="inferred from homology"/>
<gene>
    <name evidence="1" type="primary">pdxA</name>
    <name type="ordered locus">PXO_04644</name>
</gene>
<sequence>MVPSLALVPGEPAGIGPELCVRLAQRPRPDAHLIAYADPDTLHSAAKSLSLSVRLLDPDQPARAPGDLPLHPVRQAVATRFGAPDPANAAAVIAGLRGAADACLTGRLQGIVTGPVHKAVINAGGIPYTGTTELLADHAGCPVVMMLANSIVRVALVTTHLPLRAVADAITADALQQCLRITHAAMQRDFGLEDPRIAVLGLNPHAGEDGLLGREELDIVIPVIEQLRGDGMHLIGPLPADTAFLPQKLGGFDAVVAMYHDQGLPVLKYSGFEQAVNITLGLPYPRVAVDHGTALELAGRRIADPSSLMAATALCARLAARR</sequence>
<organism>
    <name type="scientific">Xanthomonas oryzae pv. oryzae (strain PXO99A)</name>
    <dbReference type="NCBI Taxonomy" id="360094"/>
    <lineage>
        <taxon>Bacteria</taxon>
        <taxon>Pseudomonadati</taxon>
        <taxon>Pseudomonadota</taxon>
        <taxon>Gammaproteobacteria</taxon>
        <taxon>Lysobacterales</taxon>
        <taxon>Lysobacteraceae</taxon>
        <taxon>Xanthomonas</taxon>
    </lineage>
</organism>
<name>PDXA_XANOP</name>
<protein>
    <recommendedName>
        <fullName evidence="1">4-hydroxythreonine-4-phosphate dehydrogenase</fullName>
        <ecNumber evidence="1">1.1.1.262</ecNumber>
    </recommendedName>
    <alternativeName>
        <fullName evidence="1">4-(phosphohydroxy)-L-threonine dehydrogenase</fullName>
    </alternativeName>
</protein>
<comment type="function">
    <text evidence="1">Catalyzes the NAD(P)-dependent oxidation of 4-(phosphooxy)-L-threonine (HTP) into 2-amino-3-oxo-4-(phosphooxy)butyric acid which spontaneously decarboxylates to form 3-amino-2-oxopropyl phosphate (AHAP).</text>
</comment>
<comment type="catalytic activity">
    <reaction evidence="1">
        <text>4-(phosphooxy)-L-threonine + NAD(+) = 3-amino-2-oxopropyl phosphate + CO2 + NADH</text>
        <dbReference type="Rhea" id="RHEA:32275"/>
        <dbReference type="ChEBI" id="CHEBI:16526"/>
        <dbReference type="ChEBI" id="CHEBI:57279"/>
        <dbReference type="ChEBI" id="CHEBI:57540"/>
        <dbReference type="ChEBI" id="CHEBI:57945"/>
        <dbReference type="ChEBI" id="CHEBI:58452"/>
        <dbReference type="EC" id="1.1.1.262"/>
    </reaction>
</comment>
<comment type="cofactor">
    <cofactor evidence="1">
        <name>Zn(2+)</name>
        <dbReference type="ChEBI" id="CHEBI:29105"/>
    </cofactor>
    <cofactor evidence="1">
        <name>Mg(2+)</name>
        <dbReference type="ChEBI" id="CHEBI:18420"/>
    </cofactor>
    <cofactor evidence="1">
        <name>Co(2+)</name>
        <dbReference type="ChEBI" id="CHEBI:48828"/>
    </cofactor>
    <text evidence="1">Binds 1 divalent metal cation per subunit. Can use ions such as Zn(2+), Mg(2+) or Co(2+).</text>
</comment>
<comment type="pathway">
    <text evidence="1">Cofactor biosynthesis; pyridoxine 5'-phosphate biosynthesis; pyridoxine 5'-phosphate from D-erythrose 4-phosphate: step 4/5.</text>
</comment>
<comment type="subunit">
    <text evidence="1">Homodimer.</text>
</comment>
<comment type="subcellular location">
    <subcellularLocation>
        <location evidence="1">Cytoplasm</location>
    </subcellularLocation>
</comment>
<comment type="miscellaneous">
    <text evidence="1">The active site is located at the dimer interface.</text>
</comment>
<comment type="similarity">
    <text evidence="1">Belongs to the PdxA family.</text>
</comment>
<accession>B2SPT4</accession>
<dbReference type="EC" id="1.1.1.262" evidence="1"/>
<dbReference type="EMBL" id="CP000967">
    <property type="protein sequence ID" value="ACD57771.1"/>
    <property type="molecule type" value="Genomic_DNA"/>
</dbReference>
<dbReference type="SMR" id="B2SPT4"/>
<dbReference type="KEGG" id="xop:PXO_04644"/>
<dbReference type="eggNOG" id="COG1995">
    <property type="taxonomic scope" value="Bacteria"/>
</dbReference>
<dbReference type="HOGENOM" id="CLU_040168_1_0_6"/>
<dbReference type="UniPathway" id="UPA00244">
    <property type="reaction ID" value="UER00312"/>
</dbReference>
<dbReference type="Proteomes" id="UP000001740">
    <property type="component" value="Chromosome"/>
</dbReference>
<dbReference type="GO" id="GO:0005737">
    <property type="term" value="C:cytoplasm"/>
    <property type="evidence" value="ECO:0007669"/>
    <property type="project" value="UniProtKB-SubCell"/>
</dbReference>
<dbReference type="GO" id="GO:0050570">
    <property type="term" value="F:4-hydroxythreonine-4-phosphate dehydrogenase activity"/>
    <property type="evidence" value="ECO:0007669"/>
    <property type="project" value="UniProtKB-UniRule"/>
</dbReference>
<dbReference type="GO" id="GO:0050897">
    <property type="term" value="F:cobalt ion binding"/>
    <property type="evidence" value="ECO:0007669"/>
    <property type="project" value="UniProtKB-UniRule"/>
</dbReference>
<dbReference type="GO" id="GO:0000287">
    <property type="term" value="F:magnesium ion binding"/>
    <property type="evidence" value="ECO:0007669"/>
    <property type="project" value="UniProtKB-UniRule"/>
</dbReference>
<dbReference type="GO" id="GO:0051287">
    <property type="term" value="F:NAD binding"/>
    <property type="evidence" value="ECO:0007669"/>
    <property type="project" value="InterPro"/>
</dbReference>
<dbReference type="GO" id="GO:0008270">
    <property type="term" value="F:zinc ion binding"/>
    <property type="evidence" value="ECO:0007669"/>
    <property type="project" value="UniProtKB-UniRule"/>
</dbReference>
<dbReference type="GO" id="GO:0042823">
    <property type="term" value="P:pyridoxal phosphate biosynthetic process"/>
    <property type="evidence" value="ECO:0007669"/>
    <property type="project" value="UniProtKB-UniRule"/>
</dbReference>
<dbReference type="GO" id="GO:0008615">
    <property type="term" value="P:pyridoxine biosynthetic process"/>
    <property type="evidence" value="ECO:0007669"/>
    <property type="project" value="UniProtKB-UniRule"/>
</dbReference>
<dbReference type="Gene3D" id="3.40.718.10">
    <property type="entry name" value="Isopropylmalate Dehydrogenase"/>
    <property type="match status" value="1"/>
</dbReference>
<dbReference type="HAMAP" id="MF_00536">
    <property type="entry name" value="PdxA"/>
    <property type="match status" value="1"/>
</dbReference>
<dbReference type="InterPro" id="IPR037510">
    <property type="entry name" value="PdxA"/>
</dbReference>
<dbReference type="InterPro" id="IPR005255">
    <property type="entry name" value="PdxA_fam"/>
</dbReference>
<dbReference type="NCBIfam" id="TIGR00557">
    <property type="entry name" value="pdxA"/>
    <property type="match status" value="1"/>
</dbReference>
<dbReference type="PANTHER" id="PTHR30004">
    <property type="entry name" value="4-HYDROXYTHREONINE-4-PHOSPHATE DEHYDROGENASE"/>
    <property type="match status" value="1"/>
</dbReference>
<dbReference type="PANTHER" id="PTHR30004:SF5">
    <property type="entry name" value="4-HYDROXYTHREONINE-4-PHOSPHATE DEHYDROGENASE"/>
    <property type="match status" value="1"/>
</dbReference>
<dbReference type="Pfam" id="PF04166">
    <property type="entry name" value="PdxA"/>
    <property type="match status" value="1"/>
</dbReference>
<dbReference type="SUPFAM" id="SSF53659">
    <property type="entry name" value="Isocitrate/Isopropylmalate dehydrogenase-like"/>
    <property type="match status" value="1"/>
</dbReference>
<reference key="1">
    <citation type="journal article" date="2008" name="BMC Genomics">
        <title>Genome sequence and rapid evolution of the rice pathogen Xanthomonas oryzae pv. oryzae PXO99A.</title>
        <authorList>
            <person name="Salzberg S.L."/>
            <person name="Sommer D.D."/>
            <person name="Schatz M.C."/>
            <person name="Phillippy A.M."/>
            <person name="Rabinowicz P.D."/>
            <person name="Tsuge S."/>
            <person name="Furutani A."/>
            <person name="Ochiai H."/>
            <person name="Delcher A.L."/>
            <person name="Kelley D."/>
            <person name="Madupu R."/>
            <person name="Puiu D."/>
            <person name="Radune D."/>
            <person name="Shumway M."/>
            <person name="Trapnell C."/>
            <person name="Aparna G."/>
            <person name="Jha G."/>
            <person name="Pandey A."/>
            <person name="Patil P.B."/>
            <person name="Ishihara H."/>
            <person name="Meyer D.F."/>
            <person name="Szurek B."/>
            <person name="Verdier V."/>
            <person name="Koebnik R."/>
            <person name="Dow J.M."/>
            <person name="Ryan R.P."/>
            <person name="Hirata H."/>
            <person name="Tsuyumu S."/>
            <person name="Won Lee S."/>
            <person name="Seo Y.-S."/>
            <person name="Sriariyanum M."/>
            <person name="Ronald P.C."/>
            <person name="Sonti R.V."/>
            <person name="Van Sluys M.-A."/>
            <person name="Leach J.E."/>
            <person name="White F.F."/>
            <person name="Bogdanove A.J."/>
        </authorList>
    </citation>
    <scope>NUCLEOTIDE SEQUENCE [LARGE SCALE GENOMIC DNA]</scope>
    <source>
        <strain>PXO99A</strain>
    </source>
</reference>